<name>QUEE_FLAPJ</name>
<comment type="function">
    <text evidence="1">Catalyzes the complex heterocyclic radical-mediated conversion of 6-carboxy-5,6,7,8-tetrahydropterin (CPH4) to 7-carboxy-7-deazaguanine (CDG), a step common to the biosynthetic pathways of all 7-deazapurine-containing compounds.</text>
</comment>
<comment type="catalytic activity">
    <reaction evidence="1">
        <text>6-carboxy-5,6,7,8-tetrahydropterin + H(+) = 7-carboxy-7-deazaguanine + NH4(+)</text>
        <dbReference type="Rhea" id="RHEA:27974"/>
        <dbReference type="ChEBI" id="CHEBI:15378"/>
        <dbReference type="ChEBI" id="CHEBI:28938"/>
        <dbReference type="ChEBI" id="CHEBI:61032"/>
        <dbReference type="ChEBI" id="CHEBI:61036"/>
        <dbReference type="EC" id="4.3.99.3"/>
    </reaction>
</comment>
<comment type="cofactor">
    <cofactor evidence="1">
        <name>[4Fe-4S] cluster</name>
        <dbReference type="ChEBI" id="CHEBI:49883"/>
    </cofactor>
    <text evidence="1">Binds 1 [4Fe-4S] cluster. The cluster is coordinated with 3 cysteines and an exchangeable S-adenosyl-L-methionine.</text>
</comment>
<comment type="cofactor">
    <cofactor evidence="1">
        <name>S-adenosyl-L-methionine</name>
        <dbReference type="ChEBI" id="CHEBI:59789"/>
    </cofactor>
    <text evidence="1">Binds 1 S-adenosyl-L-methionine per subunit.</text>
</comment>
<comment type="cofactor">
    <cofactor evidence="1">
        <name>Mg(2+)</name>
        <dbReference type="ChEBI" id="CHEBI:18420"/>
    </cofactor>
</comment>
<comment type="pathway">
    <text evidence="1">Purine metabolism; 7-cyano-7-deazaguanine biosynthesis.</text>
</comment>
<comment type="subunit">
    <text evidence="1">Homodimer.</text>
</comment>
<comment type="similarity">
    <text evidence="1">Belongs to the radical SAM superfamily. 7-carboxy-7-deazaguanine synthase family.</text>
</comment>
<keyword id="KW-0004">4Fe-4S</keyword>
<keyword id="KW-0408">Iron</keyword>
<keyword id="KW-0411">Iron-sulfur</keyword>
<keyword id="KW-0456">Lyase</keyword>
<keyword id="KW-0460">Magnesium</keyword>
<keyword id="KW-0479">Metal-binding</keyword>
<keyword id="KW-0671">Queuosine biosynthesis</keyword>
<keyword id="KW-1185">Reference proteome</keyword>
<keyword id="KW-0949">S-adenosyl-L-methionine</keyword>
<dbReference type="EC" id="4.3.99.3" evidence="1"/>
<dbReference type="EMBL" id="AM398681">
    <property type="protein sequence ID" value="CAL44256.1"/>
    <property type="molecule type" value="Genomic_DNA"/>
</dbReference>
<dbReference type="RefSeq" id="WP_011964290.1">
    <property type="nucleotide sequence ID" value="NC_009613.3"/>
</dbReference>
<dbReference type="RefSeq" id="YP_001297057.1">
    <property type="nucleotide sequence ID" value="NC_009613.3"/>
</dbReference>
<dbReference type="SMR" id="A6H1N2"/>
<dbReference type="STRING" id="402612.FP2200"/>
<dbReference type="EnsemblBacteria" id="CAL44256">
    <property type="protein sequence ID" value="CAL44256"/>
    <property type="gene ID" value="FP2200"/>
</dbReference>
<dbReference type="KEGG" id="fps:FP2200"/>
<dbReference type="PATRIC" id="fig|402612.5.peg.2246"/>
<dbReference type="eggNOG" id="COG0602">
    <property type="taxonomic scope" value="Bacteria"/>
</dbReference>
<dbReference type="HOGENOM" id="CLU_066739_0_1_10"/>
<dbReference type="OrthoDB" id="9792276at2"/>
<dbReference type="UniPathway" id="UPA00391"/>
<dbReference type="Proteomes" id="UP000006394">
    <property type="component" value="Chromosome"/>
</dbReference>
<dbReference type="GO" id="GO:0051539">
    <property type="term" value="F:4 iron, 4 sulfur cluster binding"/>
    <property type="evidence" value="ECO:0007669"/>
    <property type="project" value="UniProtKB-UniRule"/>
</dbReference>
<dbReference type="GO" id="GO:0016840">
    <property type="term" value="F:carbon-nitrogen lyase activity"/>
    <property type="evidence" value="ECO:0007669"/>
    <property type="project" value="UniProtKB-UniRule"/>
</dbReference>
<dbReference type="GO" id="GO:0000287">
    <property type="term" value="F:magnesium ion binding"/>
    <property type="evidence" value="ECO:0007669"/>
    <property type="project" value="UniProtKB-UniRule"/>
</dbReference>
<dbReference type="GO" id="GO:1904047">
    <property type="term" value="F:S-adenosyl-L-methionine binding"/>
    <property type="evidence" value="ECO:0007669"/>
    <property type="project" value="UniProtKB-UniRule"/>
</dbReference>
<dbReference type="GO" id="GO:0008616">
    <property type="term" value="P:queuosine biosynthetic process"/>
    <property type="evidence" value="ECO:0007669"/>
    <property type="project" value="UniProtKB-UniRule"/>
</dbReference>
<dbReference type="Gene3D" id="3.20.20.70">
    <property type="entry name" value="Aldolase class I"/>
    <property type="match status" value="1"/>
</dbReference>
<dbReference type="HAMAP" id="MF_00917">
    <property type="entry name" value="QueE"/>
    <property type="match status" value="1"/>
</dbReference>
<dbReference type="InterPro" id="IPR024924">
    <property type="entry name" value="7-CO-7-deazaguanine_synth-like"/>
</dbReference>
<dbReference type="InterPro" id="IPR013785">
    <property type="entry name" value="Aldolase_TIM"/>
</dbReference>
<dbReference type="InterPro" id="IPR007197">
    <property type="entry name" value="rSAM"/>
</dbReference>
<dbReference type="PANTHER" id="PTHR42836">
    <property type="entry name" value="7-CARBOXY-7-DEAZAGUANINE SYNTHASE"/>
    <property type="match status" value="1"/>
</dbReference>
<dbReference type="PANTHER" id="PTHR42836:SF1">
    <property type="entry name" value="7-CARBOXY-7-DEAZAGUANINE SYNTHASE"/>
    <property type="match status" value="1"/>
</dbReference>
<dbReference type="Pfam" id="PF13353">
    <property type="entry name" value="Fer4_12"/>
    <property type="match status" value="1"/>
</dbReference>
<dbReference type="Pfam" id="PF04055">
    <property type="entry name" value="Radical_SAM"/>
    <property type="match status" value="1"/>
</dbReference>
<dbReference type="PIRSF" id="PIRSF000370">
    <property type="entry name" value="QueE"/>
    <property type="match status" value="1"/>
</dbReference>
<dbReference type="SFLD" id="SFLDS00029">
    <property type="entry name" value="Radical_SAM"/>
    <property type="match status" value="1"/>
</dbReference>
<dbReference type="SUPFAM" id="SSF102114">
    <property type="entry name" value="Radical SAM enzymes"/>
    <property type="match status" value="1"/>
</dbReference>
<dbReference type="PROSITE" id="PS51918">
    <property type="entry name" value="RADICAL_SAM"/>
    <property type="match status" value="1"/>
</dbReference>
<reference key="1">
    <citation type="journal article" date="2007" name="Nat. Biotechnol.">
        <title>Complete genome sequence of the fish pathogen Flavobacterium psychrophilum.</title>
        <authorList>
            <person name="Duchaud E."/>
            <person name="Boussaha M."/>
            <person name="Loux V."/>
            <person name="Bernardet J.-F."/>
            <person name="Michel C."/>
            <person name="Kerouault B."/>
            <person name="Mondot S."/>
            <person name="Nicolas P."/>
            <person name="Bossy R."/>
            <person name="Caron C."/>
            <person name="Bessieres P."/>
            <person name="Gibrat J.-F."/>
            <person name="Claverol S."/>
            <person name="Dumetz F."/>
            <person name="Le Henaff M."/>
            <person name="Benmansour A."/>
        </authorList>
    </citation>
    <scope>NUCLEOTIDE SEQUENCE [LARGE SCALE GENOMIC DNA]</scope>
    <source>
        <strain>ATCC 49511 / DSM 21280 / CIP 103535 / JIP02/86</strain>
    </source>
</reference>
<protein>
    <recommendedName>
        <fullName evidence="1">7-carboxy-7-deazaguanine synthase</fullName>
        <shortName evidence="1">CDG synthase</shortName>
        <ecNumber evidence="1">4.3.99.3</ecNumber>
    </recommendedName>
    <alternativeName>
        <fullName evidence="1">Queuosine biosynthesis protein QueE</fullName>
    </alternativeName>
</protein>
<accession>A6H1N2</accession>
<gene>
    <name evidence="1" type="primary">queE</name>
    <name type="ordered locus">FP2200</name>
</gene>
<feature type="chain" id="PRO_0000416204" description="7-carboxy-7-deazaguanine synthase">
    <location>
        <begin position="1"/>
        <end position="210"/>
    </location>
</feature>
<feature type="domain" description="Radical SAM core" evidence="2">
    <location>
        <begin position="31"/>
        <end position="210"/>
    </location>
</feature>
<feature type="binding site" evidence="1">
    <location>
        <begin position="25"/>
        <end position="27"/>
    </location>
    <ligand>
        <name>substrate</name>
    </ligand>
</feature>
<feature type="binding site" evidence="1">
    <location>
        <position position="40"/>
    </location>
    <ligand>
        <name>substrate</name>
    </ligand>
</feature>
<feature type="binding site" evidence="1">
    <location>
        <position position="44"/>
    </location>
    <ligand>
        <name>[4Fe-4S] cluster</name>
        <dbReference type="ChEBI" id="CHEBI:49883"/>
        <note>4Fe-4S-S-AdoMet</note>
    </ligand>
</feature>
<feature type="binding site" evidence="1">
    <location>
        <position position="48"/>
    </location>
    <ligand>
        <name>[4Fe-4S] cluster</name>
        <dbReference type="ChEBI" id="CHEBI:49883"/>
        <note>4Fe-4S-S-AdoMet</note>
    </ligand>
</feature>
<feature type="binding site" evidence="1">
    <location>
        <position position="51"/>
    </location>
    <ligand>
        <name>[4Fe-4S] cluster</name>
        <dbReference type="ChEBI" id="CHEBI:49883"/>
        <note>4Fe-4S-S-AdoMet</note>
    </ligand>
</feature>
<feature type="binding site" evidence="1">
    <location>
        <position position="84"/>
    </location>
    <ligand>
        <name>substrate</name>
    </ligand>
</feature>
<feature type="binding site" evidence="1">
    <location>
        <position position="86"/>
    </location>
    <ligand>
        <name>S-adenosyl-L-methionine</name>
        <dbReference type="ChEBI" id="CHEBI:59789"/>
    </ligand>
</feature>
<feature type="binding site" evidence="1">
    <location>
        <begin position="127"/>
        <end position="129"/>
    </location>
    <ligand>
        <name>S-adenosyl-L-methionine</name>
        <dbReference type="ChEBI" id="CHEBI:59789"/>
    </ligand>
</feature>
<feature type="binding site" evidence="1">
    <location>
        <position position="210"/>
    </location>
    <ligand>
        <name>substrate</name>
    </ligand>
</feature>
<sequence>MLTKEIQIAVEKGEMLPLMEEFYTIQGEGYHTGTAAYFIRIGGCDVGCHWCDVKESWNAALHPPTKTDVIVENATKYAKTIVVTGGEPLTWDMTVLTQRLKAENLQVHIETSGAYPVTGAWDWFCLSPKKNKLPVAEAYEIAHELKVIIYNKHDFIFAEEQAAKVNKNAILFLQSEWSKKEEMTPFIVDYVMNNPKWRVSLQTHKYLNIP</sequence>
<proteinExistence type="inferred from homology"/>
<organism>
    <name type="scientific">Flavobacterium psychrophilum (strain ATCC 49511 / DSM 21280 / CIP 103535 / JIP02/86)</name>
    <dbReference type="NCBI Taxonomy" id="402612"/>
    <lineage>
        <taxon>Bacteria</taxon>
        <taxon>Pseudomonadati</taxon>
        <taxon>Bacteroidota</taxon>
        <taxon>Flavobacteriia</taxon>
        <taxon>Flavobacteriales</taxon>
        <taxon>Flavobacteriaceae</taxon>
        <taxon>Flavobacterium</taxon>
    </lineage>
</organism>
<evidence type="ECO:0000255" key="1">
    <source>
        <dbReference type="HAMAP-Rule" id="MF_00917"/>
    </source>
</evidence>
<evidence type="ECO:0000255" key="2">
    <source>
        <dbReference type="PROSITE-ProRule" id="PRU01266"/>
    </source>
</evidence>